<feature type="signal peptide" evidence="2">
    <location>
        <begin position="1"/>
        <end position="26"/>
    </location>
</feature>
<feature type="chain" id="PRO_0000007028" description="Defensin-like protein 6">
    <location>
        <begin position="27"/>
        <end position="73"/>
    </location>
</feature>
<feature type="disulfide bond" evidence="1">
    <location>
        <begin position="29"/>
        <end position="73"/>
    </location>
</feature>
<feature type="disulfide bond" evidence="1">
    <location>
        <begin position="40"/>
        <end position="60"/>
    </location>
</feature>
<feature type="disulfide bond" evidence="1">
    <location>
        <begin position="46"/>
        <end position="67"/>
    </location>
</feature>
<feature type="disulfide bond" evidence="1">
    <location>
        <begin position="50"/>
        <end position="69"/>
    </location>
</feature>
<dbReference type="EMBL" id="AB005234">
    <property type="protein sequence ID" value="BAB10459.1"/>
    <property type="molecule type" value="Genomic_DNA"/>
</dbReference>
<dbReference type="EMBL" id="CP002688">
    <property type="protein sequence ID" value="AED97782.1"/>
    <property type="molecule type" value="Genomic_DNA"/>
</dbReference>
<dbReference type="RefSeq" id="NP_201171.1">
    <property type="nucleotide sequence ID" value="NM_125761.2"/>
</dbReference>
<dbReference type="SMR" id="Q9FFP8"/>
<dbReference type="FunCoup" id="Q9FFP8">
    <property type="interactions" value="172"/>
</dbReference>
<dbReference type="STRING" id="3702.Q9FFP8"/>
<dbReference type="PaxDb" id="3702-AT5G63660.1"/>
<dbReference type="ProteomicsDB" id="224591"/>
<dbReference type="EnsemblPlants" id="AT5G63660.1">
    <property type="protein sequence ID" value="AT5G63660.1"/>
    <property type="gene ID" value="AT5G63660"/>
</dbReference>
<dbReference type="GeneID" id="836486"/>
<dbReference type="Gramene" id="AT5G63660.1">
    <property type="protein sequence ID" value="AT5G63660.1"/>
    <property type="gene ID" value="AT5G63660"/>
</dbReference>
<dbReference type="KEGG" id="ath:AT5G63660"/>
<dbReference type="Araport" id="AT5G63660"/>
<dbReference type="TAIR" id="AT5G63660">
    <property type="gene designation" value="PDF2.5"/>
</dbReference>
<dbReference type="eggNOG" id="ENOG502S7BC">
    <property type="taxonomic scope" value="Eukaryota"/>
</dbReference>
<dbReference type="HOGENOM" id="CLU_161668_1_2_1"/>
<dbReference type="InParanoid" id="Q9FFP8"/>
<dbReference type="OMA" id="HRRCYCT"/>
<dbReference type="OrthoDB" id="1057497at2759"/>
<dbReference type="PhylomeDB" id="Q9FFP8"/>
<dbReference type="PRO" id="PR:Q9FFP8"/>
<dbReference type="Proteomes" id="UP000006548">
    <property type="component" value="Chromosome 5"/>
</dbReference>
<dbReference type="ExpressionAtlas" id="Q9FFP8">
    <property type="expression patterns" value="baseline and differential"/>
</dbReference>
<dbReference type="GO" id="GO:0005576">
    <property type="term" value="C:extracellular region"/>
    <property type="evidence" value="ECO:0007669"/>
    <property type="project" value="UniProtKB-SubCell"/>
</dbReference>
<dbReference type="GO" id="GO:0006952">
    <property type="term" value="P:defense response"/>
    <property type="evidence" value="ECO:0000250"/>
    <property type="project" value="TAIR"/>
</dbReference>
<dbReference type="GO" id="GO:0050832">
    <property type="term" value="P:defense response to fungus"/>
    <property type="evidence" value="ECO:0007669"/>
    <property type="project" value="UniProtKB-KW"/>
</dbReference>
<dbReference type="GO" id="GO:0031640">
    <property type="term" value="P:killing of cells of another organism"/>
    <property type="evidence" value="ECO:0007669"/>
    <property type="project" value="UniProtKB-KW"/>
</dbReference>
<dbReference type="CDD" id="cd00107">
    <property type="entry name" value="Knot1"/>
    <property type="match status" value="1"/>
</dbReference>
<dbReference type="FunFam" id="3.30.30.10:FF:000004">
    <property type="entry name" value="Defensin-like protein CAL1"/>
    <property type="match status" value="1"/>
</dbReference>
<dbReference type="Gene3D" id="3.30.30.10">
    <property type="entry name" value="Knottin, scorpion toxin-like"/>
    <property type="match status" value="1"/>
</dbReference>
<dbReference type="InterPro" id="IPR008176">
    <property type="entry name" value="Defensin_plant"/>
</dbReference>
<dbReference type="InterPro" id="IPR003614">
    <property type="entry name" value="Scorpion_toxin-like"/>
</dbReference>
<dbReference type="InterPro" id="IPR036574">
    <property type="entry name" value="Scorpion_toxin-like_sf"/>
</dbReference>
<dbReference type="PANTHER" id="PTHR33147">
    <property type="entry name" value="DEFENSIN-LIKE PROTEIN 1"/>
    <property type="match status" value="1"/>
</dbReference>
<dbReference type="PANTHER" id="PTHR33147:SF133">
    <property type="entry name" value="DEFENSIN-LIKE PROTEIN 6-RELATED"/>
    <property type="match status" value="1"/>
</dbReference>
<dbReference type="Pfam" id="PF00304">
    <property type="entry name" value="Gamma-thionin"/>
    <property type="match status" value="1"/>
</dbReference>
<dbReference type="PRINTS" id="PR00288">
    <property type="entry name" value="PUROTHIONIN"/>
</dbReference>
<dbReference type="SMART" id="SM00505">
    <property type="entry name" value="Knot1"/>
    <property type="match status" value="1"/>
</dbReference>
<dbReference type="SUPFAM" id="SSF57095">
    <property type="entry name" value="Scorpion toxin-like"/>
    <property type="match status" value="1"/>
</dbReference>
<organism>
    <name type="scientific">Arabidopsis thaliana</name>
    <name type="common">Mouse-ear cress</name>
    <dbReference type="NCBI Taxonomy" id="3702"/>
    <lineage>
        <taxon>Eukaryota</taxon>
        <taxon>Viridiplantae</taxon>
        <taxon>Streptophyta</taxon>
        <taxon>Embryophyta</taxon>
        <taxon>Tracheophyta</taxon>
        <taxon>Spermatophyta</taxon>
        <taxon>Magnoliopsida</taxon>
        <taxon>eudicotyledons</taxon>
        <taxon>Gunneridae</taxon>
        <taxon>Pentapetalae</taxon>
        <taxon>rosids</taxon>
        <taxon>malvids</taxon>
        <taxon>Brassicales</taxon>
        <taxon>Brassicaceae</taxon>
        <taxon>Camelineae</taxon>
        <taxon>Arabidopsis</taxon>
    </lineage>
</organism>
<gene>
    <name type="primary">PDF2.5</name>
    <name type="synonym">LCR74</name>
    <name type="ordered locus">At5g63660</name>
    <name type="ORF">MBK5.14</name>
</gene>
<reference key="1">
    <citation type="journal article" date="1997" name="DNA Res.">
        <title>Structural analysis of Arabidopsis thaliana chromosome 5. I. Sequence features of the 1.6 Mb regions covered by twenty physically assigned P1 clones.</title>
        <authorList>
            <person name="Sato S."/>
            <person name="Kotani H."/>
            <person name="Nakamura Y."/>
            <person name="Kaneko T."/>
            <person name="Asamizu E."/>
            <person name="Fukami M."/>
            <person name="Miyajima N."/>
            <person name="Tabata S."/>
        </authorList>
    </citation>
    <scope>NUCLEOTIDE SEQUENCE [LARGE SCALE GENOMIC DNA]</scope>
    <source>
        <strain>cv. Columbia</strain>
    </source>
</reference>
<reference key="2">
    <citation type="journal article" date="2017" name="Plant J.">
        <title>Araport11: a complete reannotation of the Arabidopsis thaliana reference genome.</title>
        <authorList>
            <person name="Cheng C.Y."/>
            <person name="Krishnakumar V."/>
            <person name="Chan A.P."/>
            <person name="Thibaud-Nissen F."/>
            <person name="Schobel S."/>
            <person name="Town C.D."/>
        </authorList>
    </citation>
    <scope>GENOME REANNOTATION</scope>
    <source>
        <strain>cv. Columbia</strain>
    </source>
</reference>
<reference key="3">
    <citation type="journal article" date="2001" name="Plant Mol. Biol.">
        <title>Two large Arabidopsis thaliana gene families are homologous to the Brassica gene superfamily that encodes pollen coat proteins and the male component of the self-incompatibility response.</title>
        <authorList>
            <person name="Vanoosthuyse V."/>
            <person name="Miege C."/>
            <person name="Dumas C."/>
            <person name="Cock J.M."/>
        </authorList>
    </citation>
    <scope>IDENTIFICATION</scope>
</reference>
<reference key="4">
    <citation type="journal article" date="2002" name="Planta">
        <title>Plant defensins.</title>
        <authorList>
            <person name="Thomma B.P.H.J."/>
            <person name="Cammue B.P."/>
            <person name="Thevissen K."/>
        </authorList>
    </citation>
    <scope>GENE FAMILY</scope>
    <scope>NOMENCLATURE</scope>
</reference>
<reference key="5">
    <citation type="journal article" date="2005" name="Plant Physiol.">
        <title>Genome organization of more than 300 defensin-like genes in Arabidopsis.</title>
        <authorList>
            <person name="Silverstein K.A.T."/>
            <person name="Graham M.A."/>
            <person name="Paape T.D."/>
            <person name="VandenBosch K.A."/>
        </authorList>
    </citation>
    <scope>GENE FAMILY</scope>
</reference>
<comment type="function">
    <text>Confers broad-spectrum resistance to pathogens.</text>
</comment>
<comment type="subcellular location">
    <subcellularLocation>
        <location evidence="1">Secreted</location>
    </subcellularLocation>
</comment>
<comment type="similarity">
    <text evidence="3">Belongs to the DEFL family.</text>
</comment>
<evidence type="ECO:0000250" key="1"/>
<evidence type="ECO:0000255" key="2"/>
<evidence type="ECO:0000305" key="3"/>
<keyword id="KW-0929">Antimicrobial</keyword>
<keyword id="KW-1015">Disulfide bond</keyword>
<keyword id="KW-0295">Fungicide</keyword>
<keyword id="KW-0611">Plant defense</keyword>
<keyword id="KW-1185">Reference proteome</keyword>
<keyword id="KW-0964">Secreted</keyword>
<keyword id="KW-0732">Signal</keyword>
<proteinExistence type="inferred from homology"/>
<protein>
    <recommendedName>
        <fullName>Defensin-like protein 6</fullName>
    </recommendedName>
    <alternativeName>
        <fullName>Low-molecular-weight cysteine-rich protein 74</fullName>
        <shortName>Protein LCR74</shortName>
    </alternativeName>
    <alternativeName>
        <fullName>Plant defensin 2.5</fullName>
    </alternativeName>
</protein>
<name>DEF06_ARATH</name>
<accession>Q9FFP8</accession>
<accession>P82783</accession>
<sequence length="73" mass="8388">MENKFFAAFFLLLVLFSSQEIIGGEGRTCQSKSHHFKYMCTSNHNCAIVCRNEGFSGGRCHGFHRRCYCTRLC</sequence>